<accession>Q6CQL7</accession>
<organism>
    <name type="scientific">Kluyveromyces lactis (strain ATCC 8585 / CBS 2359 / DSM 70799 / NBRC 1267 / NRRL Y-1140 / WM37)</name>
    <name type="common">Yeast</name>
    <name type="synonym">Candida sphaerica</name>
    <dbReference type="NCBI Taxonomy" id="284590"/>
    <lineage>
        <taxon>Eukaryota</taxon>
        <taxon>Fungi</taxon>
        <taxon>Dikarya</taxon>
        <taxon>Ascomycota</taxon>
        <taxon>Saccharomycotina</taxon>
        <taxon>Saccharomycetes</taxon>
        <taxon>Saccharomycetales</taxon>
        <taxon>Saccharomycetaceae</taxon>
        <taxon>Kluyveromyces</taxon>
    </lineage>
</organism>
<sequence length="267" mass="29913">MTKFVGCIDLHDGQVKQIVGGTLTDSSKDKVTTNFVSKLPPSHYAKLYHENQVEGCHVIKLGPNNDEAALEALNECPNFLQVGGGITLDNCGYWLKYASKIIVTSFLFDKSTYQFQREKLVKLAEICGKDRLVVDLSCKRVTKPDQEPKWVVAMNKWQTLTDLELNERTFADLCQYTDEFLVHAADVEGLCNGIDEELVAHLYKWTADIPKVKIVYAGGAKSVDDLRLVEKLSHGKIDLTFGSALDIFGGSLVKFEDCVQWNHEKHA</sequence>
<gene>
    <name type="primary">HIS6</name>
    <name type="ordered locus">KLLA0D16148g</name>
</gene>
<comment type="catalytic activity">
    <reaction>
        <text>1-(5-phospho-beta-D-ribosyl)-5-[(5-phospho-beta-D-ribosylamino)methylideneamino]imidazole-4-carboxamide = 5-[(5-phospho-1-deoxy-D-ribulos-1-ylimino)methylamino]-1-(5-phospho-beta-D-ribosyl)imidazole-4-carboxamide</text>
        <dbReference type="Rhea" id="RHEA:15469"/>
        <dbReference type="ChEBI" id="CHEBI:58435"/>
        <dbReference type="ChEBI" id="CHEBI:58525"/>
        <dbReference type="EC" id="5.3.1.16"/>
    </reaction>
</comment>
<comment type="pathway">
    <text>Amino-acid biosynthesis; L-histidine biosynthesis; L-histidine from 5-phospho-alpha-D-ribose 1-diphosphate: step 4/9.</text>
</comment>
<comment type="subcellular location">
    <subcellularLocation>
        <location evidence="1">Cytoplasm</location>
    </subcellularLocation>
</comment>
<comment type="similarity">
    <text evidence="2">Belongs to the HisA/HisF family.</text>
</comment>
<protein>
    <recommendedName>
        <fullName>1-(5-phosphoribosyl)-5-[(5-phosphoribosylamino)methylideneamino] imidazole-4-carboxamide isomerase</fullName>
        <ecNumber>5.3.1.16</ecNumber>
    </recommendedName>
    <alternativeName>
        <fullName>5-proFAR isomerase</fullName>
    </alternativeName>
    <alternativeName>
        <fullName>Phosphoribosylformimino-5-aminoimidazole carboxamide ribotide isomerase</fullName>
    </alternativeName>
</protein>
<evidence type="ECO:0000250" key="1"/>
<evidence type="ECO:0000305" key="2"/>
<proteinExistence type="inferred from homology"/>
<feature type="chain" id="PRO_0000141959" description="1-(5-phosphoribosyl)-5-[(5-phosphoribosylamino)methylideneamino] imidazole-4-carboxamide isomerase">
    <location>
        <begin position="1"/>
        <end position="267"/>
    </location>
</feature>
<reference key="1">
    <citation type="journal article" date="2004" name="Nature">
        <title>Genome evolution in yeasts.</title>
        <authorList>
            <person name="Dujon B."/>
            <person name="Sherman D."/>
            <person name="Fischer G."/>
            <person name="Durrens P."/>
            <person name="Casaregola S."/>
            <person name="Lafontaine I."/>
            <person name="de Montigny J."/>
            <person name="Marck C."/>
            <person name="Neuveglise C."/>
            <person name="Talla E."/>
            <person name="Goffard N."/>
            <person name="Frangeul L."/>
            <person name="Aigle M."/>
            <person name="Anthouard V."/>
            <person name="Babour A."/>
            <person name="Barbe V."/>
            <person name="Barnay S."/>
            <person name="Blanchin S."/>
            <person name="Beckerich J.-M."/>
            <person name="Beyne E."/>
            <person name="Bleykasten C."/>
            <person name="Boisrame A."/>
            <person name="Boyer J."/>
            <person name="Cattolico L."/>
            <person name="Confanioleri F."/>
            <person name="de Daruvar A."/>
            <person name="Despons L."/>
            <person name="Fabre E."/>
            <person name="Fairhead C."/>
            <person name="Ferry-Dumazet H."/>
            <person name="Groppi A."/>
            <person name="Hantraye F."/>
            <person name="Hennequin C."/>
            <person name="Jauniaux N."/>
            <person name="Joyet P."/>
            <person name="Kachouri R."/>
            <person name="Kerrest A."/>
            <person name="Koszul R."/>
            <person name="Lemaire M."/>
            <person name="Lesur I."/>
            <person name="Ma L."/>
            <person name="Muller H."/>
            <person name="Nicaud J.-M."/>
            <person name="Nikolski M."/>
            <person name="Oztas S."/>
            <person name="Ozier-Kalogeropoulos O."/>
            <person name="Pellenz S."/>
            <person name="Potier S."/>
            <person name="Richard G.-F."/>
            <person name="Straub M.-L."/>
            <person name="Suleau A."/>
            <person name="Swennen D."/>
            <person name="Tekaia F."/>
            <person name="Wesolowski-Louvel M."/>
            <person name="Westhof E."/>
            <person name="Wirth B."/>
            <person name="Zeniou-Meyer M."/>
            <person name="Zivanovic Y."/>
            <person name="Bolotin-Fukuhara M."/>
            <person name="Thierry A."/>
            <person name="Bouchier C."/>
            <person name="Caudron B."/>
            <person name="Scarpelli C."/>
            <person name="Gaillardin C."/>
            <person name="Weissenbach J."/>
            <person name="Wincker P."/>
            <person name="Souciet J.-L."/>
        </authorList>
    </citation>
    <scope>NUCLEOTIDE SEQUENCE [LARGE SCALE GENOMIC DNA]</scope>
    <source>
        <strain>ATCC 8585 / CBS 2359 / DSM 70799 / NBRC 1267 / NRRL Y-1140 / WM37</strain>
    </source>
</reference>
<name>HIS4_KLULA</name>
<dbReference type="EC" id="5.3.1.16"/>
<dbReference type="EMBL" id="CR382124">
    <property type="protein sequence ID" value="CAH00868.1"/>
    <property type="molecule type" value="Genomic_DNA"/>
</dbReference>
<dbReference type="RefSeq" id="XP_453772.1">
    <property type="nucleotide sequence ID" value="XM_453772.1"/>
</dbReference>
<dbReference type="SMR" id="Q6CQL7"/>
<dbReference type="FunCoup" id="Q6CQL7">
    <property type="interactions" value="237"/>
</dbReference>
<dbReference type="STRING" id="284590.Q6CQL7"/>
<dbReference type="PaxDb" id="284590-Q6CQL7"/>
<dbReference type="KEGG" id="kla:KLLA0_D16148g"/>
<dbReference type="eggNOG" id="KOG3055">
    <property type="taxonomic scope" value="Eukaryota"/>
</dbReference>
<dbReference type="HOGENOM" id="CLU_065050_0_0_1"/>
<dbReference type="InParanoid" id="Q6CQL7"/>
<dbReference type="OMA" id="IEWNKTH"/>
<dbReference type="UniPathway" id="UPA00031">
    <property type="reaction ID" value="UER00009"/>
</dbReference>
<dbReference type="Proteomes" id="UP000000598">
    <property type="component" value="Chromosome D"/>
</dbReference>
<dbReference type="GO" id="GO:0005737">
    <property type="term" value="C:cytoplasm"/>
    <property type="evidence" value="ECO:0007669"/>
    <property type="project" value="UniProtKB-SubCell"/>
</dbReference>
<dbReference type="GO" id="GO:0003949">
    <property type="term" value="F:1-(5-phosphoribosyl)-5-[(5-phosphoribosylamino)methylideneamino]imidazole-4-carboxamide isomerase activity"/>
    <property type="evidence" value="ECO:0007669"/>
    <property type="project" value="UniProtKB-EC"/>
</dbReference>
<dbReference type="GO" id="GO:0000105">
    <property type="term" value="P:L-histidine biosynthetic process"/>
    <property type="evidence" value="ECO:0007669"/>
    <property type="project" value="UniProtKB-UniPathway"/>
</dbReference>
<dbReference type="GO" id="GO:0000162">
    <property type="term" value="P:L-tryptophan biosynthetic process"/>
    <property type="evidence" value="ECO:0007669"/>
    <property type="project" value="TreeGrafter"/>
</dbReference>
<dbReference type="CDD" id="cd04723">
    <property type="entry name" value="HisA_HisF"/>
    <property type="match status" value="1"/>
</dbReference>
<dbReference type="FunFam" id="3.20.20.70:FF:000110">
    <property type="entry name" value="1-(5-phosphoribosyl)-5-[(5-phosphoribosylamino)methylideneamino] imidazole-4-carboxamide isomerase, chloroplastic"/>
    <property type="match status" value="1"/>
</dbReference>
<dbReference type="Gene3D" id="3.20.20.70">
    <property type="entry name" value="Aldolase class I"/>
    <property type="match status" value="1"/>
</dbReference>
<dbReference type="InterPro" id="IPR013785">
    <property type="entry name" value="Aldolase_TIM"/>
</dbReference>
<dbReference type="InterPro" id="IPR011858">
    <property type="entry name" value="His6-like_euk"/>
</dbReference>
<dbReference type="InterPro" id="IPR006062">
    <property type="entry name" value="His_biosynth"/>
</dbReference>
<dbReference type="InterPro" id="IPR044524">
    <property type="entry name" value="Isoase_HisA-like"/>
</dbReference>
<dbReference type="InterPro" id="IPR011060">
    <property type="entry name" value="RibuloseP-bd_barrel"/>
</dbReference>
<dbReference type="NCBIfam" id="TIGR02129">
    <property type="entry name" value="hisA_euk"/>
    <property type="match status" value="1"/>
</dbReference>
<dbReference type="PANTHER" id="PTHR43090">
    <property type="entry name" value="1-(5-PHOSPHORIBOSYL)-5-[(5-PHOSPHORIBOSYLAMINO)METHYLIDENEAMINO] IMIDAZOLE-4-CARBOXAMIDE ISOMERASE"/>
    <property type="match status" value="1"/>
</dbReference>
<dbReference type="PANTHER" id="PTHR43090:SF2">
    <property type="entry name" value="1-(5-PHOSPHORIBOSYL)-5-[(5-PHOSPHORIBOSYLAMINO)METHYLIDENEAMINO] IMIDAZOLE-4-CARBOXAMIDE ISOMERASE"/>
    <property type="match status" value="1"/>
</dbReference>
<dbReference type="Pfam" id="PF00977">
    <property type="entry name" value="His_biosynth"/>
    <property type="match status" value="1"/>
</dbReference>
<dbReference type="SUPFAM" id="SSF51366">
    <property type="entry name" value="Ribulose-phoshate binding barrel"/>
    <property type="match status" value="1"/>
</dbReference>
<keyword id="KW-0028">Amino-acid biosynthesis</keyword>
<keyword id="KW-0963">Cytoplasm</keyword>
<keyword id="KW-0368">Histidine biosynthesis</keyword>
<keyword id="KW-0413">Isomerase</keyword>
<keyword id="KW-1185">Reference proteome</keyword>